<reference key="1">
    <citation type="journal article" date="1997" name="Microbiology">
        <title>A Bacillus subtilis chromosome segment at the 100 degrees to 102 degrees position encoding 11 membrane proteins.</title>
        <authorList>
            <person name="Roche B."/>
            <person name="Autret S."/>
            <person name="Levine A."/>
            <person name="Vannier F."/>
            <person name="Medina N."/>
            <person name="Seror S.J."/>
        </authorList>
    </citation>
    <scope>NUCLEOTIDE SEQUENCE [GENOMIC DNA]</scope>
    <source>
        <strain>168</strain>
    </source>
</reference>
<reference key="2">
    <citation type="journal article" date="1997" name="Nature">
        <title>The complete genome sequence of the Gram-positive bacterium Bacillus subtilis.</title>
        <authorList>
            <person name="Kunst F."/>
            <person name="Ogasawara N."/>
            <person name="Moszer I."/>
            <person name="Albertini A.M."/>
            <person name="Alloni G."/>
            <person name="Azevedo V."/>
            <person name="Bertero M.G."/>
            <person name="Bessieres P."/>
            <person name="Bolotin A."/>
            <person name="Borchert S."/>
            <person name="Borriss R."/>
            <person name="Boursier L."/>
            <person name="Brans A."/>
            <person name="Braun M."/>
            <person name="Brignell S.C."/>
            <person name="Bron S."/>
            <person name="Brouillet S."/>
            <person name="Bruschi C.V."/>
            <person name="Caldwell B."/>
            <person name="Capuano V."/>
            <person name="Carter N.M."/>
            <person name="Choi S.-K."/>
            <person name="Codani J.-J."/>
            <person name="Connerton I.F."/>
            <person name="Cummings N.J."/>
            <person name="Daniel R.A."/>
            <person name="Denizot F."/>
            <person name="Devine K.M."/>
            <person name="Duesterhoeft A."/>
            <person name="Ehrlich S.D."/>
            <person name="Emmerson P.T."/>
            <person name="Entian K.-D."/>
            <person name="Errington J."/>
            <person name="Fabret C."/>
            <person name="Ferrari E."/>
            <person name="Foulger D."/>
            <person name="Fritz C."/>
            <person name="Fujita M."/>
            <person name="Fujita Y."/>
            <person name="Fuma S."/>
            <person name="Galizzi A."/>
            <person name="Galleron N."/>
            <person name="Ghim S.-Y."/>
            <person name="Glaser P."/>
            <person name="Goffeau A."/>
            <person name="Golightly E.J."/>
            <person name="Grandi G."/>
            <person name="Guiseppi G."/>
            <person name="Guy B.J."/>
            <person name="Haga K."/>
            <person name="Haiech J."/>
            <person name="Harwood C.R."/>
            <person name="Henaut A."/>
            <person name="Hilbert H."/>
            <person name="Holsappel S."/>
            <person name="Hosono S."/>
            <person name="Hullo M.-F."/>
            <person name="Itaya M."/>
            <person name="Jones L.-M."/>
            <person name="Joris B."/>
            <person name="Karamata D."/>
            <person name="Kasahara Y."/>
            <person name="Klaerr-Blanchard M."/>
            <person name="Klein C."/>
            <person name="Kobayashi Y."/>
            <person name="Koetter P."/>
            <person name="Koningstein G."/>
            <person name="Krogh S."/>
            <person name="Kumano M."/>
            <person name="Kurita K."/>
            <person name="Lapidus A."/>
            <person name="Lardinois S."/>
            <person name="Lauber J."/>
            <person name="Lazarevic V."/>
            <person name="Lee S.-M."/>
            <person name="Levine A."/>
            <person name="Liu H."/>
            <person name="Masuda S."/>
            <person name="Mauel C."/>
            <person name="Medigue C."/>
            <person name="Medina N."/>
            <person name="Mellado R.P."/>
            <person name="Mizuno M."/>
            <person name="Moestl D."/>
            <person name="Nakai S."/>
            <person name="Noback M."/>
            <person name="Noone D."/>
            <person name="O'Reilly M."/>
            <person name="Ogawa K."/>
            <person name="Ogiwara A."/>
            <person name="Oudega B."/>
            <person name="Park S.-H."/>
            <person name="Parro V."/>
            <person name="Pohl T.M."/>
            <person name="Portetelle D."/>
            <person name="Porwollik S."/>
            <person name="Prescott A.M."/>
            <person name="Presecan E."/>
            <person name="Pujic P."/>
            <person name="Purnelle B."/>
            <person name="Rapoport G."/>
            <person name="Rey M."/>
            <person name="Reynolds S."/>
            <person name="Rieger M."/>
            <person name="Rivolta C."/>
            <person name="Rocha E."/>
            <person name="Roche B."/>
            <person name="Rose M."/>
            <person name="Sadaie Y."/>
            <person name="Sato T."/>
            <person name="Scanlan E."/>
            <person name="Schleich S."/>
            <person name="Schroeter R."/>
            <person name="Scoffone F."/>
            <person name="Sekiguchi J."/>
            <person name="Sekowska A."/>
            <person name="Seror S.J."/>
            <person name="Serror P."/>
            <person name="Shin B.-S."/>
            <person name="Soldo B."/>
            <person name="Sorokin A."/>
            <person name="Tacconi E."/>
            <person name="Takagi T."/>
            <person name="Takahashi H."/>
            <person name="Takemaru K."/>
            <person name="Takeuchi M."/>
            <person name="Tamakoshi A."/>
            <person name="Tanaka T."/>
            <person name="Terpstra P."/>
            <person name="Tognoni A."/>
            <person name="Tosato V."/>
            <person name="Uchiyama S."/>
            <person name="Vandenbol M."/>
            <person name="Vannier F."/>
            <person name="Vassarotti A."/>
            <person name="Viari A."/>
            <person name="Wambutt R."/>
            <person name="Wedler E."/>
            <person name="Wedler H."/>
            <person name="Weitzenegger T."/>
            <person name="Winters P."/>
            <person name="Wipat A."/>
            <person name="Yamamoto H."/>
            <person name="Yamane K."/>
            <person name="Yasumoto K."/>
            <person name="Yata K."/>
            <person name="Yoshida K."/>
            <person name="Yoshikawa H.-F."/>
            <person name="Zumstein E."/>
            <person name="Yoshikawa H."/>
            <person name="Danchin A."/>
        </authorList>
    </citation>
    <scope>NUCLEOTIDE SEQUENCE [LARGE SCALE GENOMIC DNA]</scope>
    <source>
        <strain>168</strain>
    </source>
</reference>
<protein>
    <recommendedName>
        <fullName evidence="1">Adenosine 5'-phosphosulfate reductase 2</fullName>
        <shortName evidence="1">APS reductase 2</shortName>
        <ecNumber evidence="1">1.8.4.10</ecNumber>
    </recommendedName>
    <alternativeName>
        <fullName evidence="1">5'-adenylylsulfate reductase 2</fullName>
    </alternativeName>
    <alternativeName>
        <fullName evidence="1">Thioredoxin-dependent 5'-adenylylsulfate reductase 2</fullName>
    </alternativeName>
</protein>
<dbReference type="EC" id="1.8.4.10" evidence="1"/>
<dbReference type="EMBL" id="Y09476">
    <property type="protein sequence ID" value="CAA70657.1"/>
    <property type="status" value="ALT_INIT"/>
    <property type="molecule type" value="Genomic_DNA"/>
</dbReference>
<dbReference type="EMBL" id="AL009126">
    <property type="protein sequence ID" value="CAB12933.2"/>
    <property type="molecule type" value="Genomic_DNA"/>
</dbReference>
<dbReference type="PIR" id="C69839">
    <property type="entry name" value="C69839"/>
</dbReference>
<dbReference type="RefSeq" id="NP_388974.2">
    <property type="nucleotide sequence ID" value="NC_000964.3"/>
</dbReference>
<dbReference type="RefSeq" id="WP_003244757.1">
    <property type="nucleotide sequence ID" value="NZ_OZ025638.1"/>
</dbReference>
<dbReference type="SMR" id="O06737"/>
<dbReference type="FunCoup" id="O06737">
    <property type="interactions" value="395"/>
</dbReference>
<dbReference type="STRING" id="224308.BSU10930"/>
<dbReference type="PaxDb" id="224308-BSU10930"/>
<dbReference type="EnsemblBacteria" id="CAB12933">
    <property type="protein sequence ID" value="CAB12933"/>
    <property type="gene ID" value="BSU_10930"/>
</dbReference>
<dbReference type="GeneID" id="939787"/>
<dbReference type="KEGG" id="bsu:BSU10930"/>
<dbReference type="PATRIC" id="fig|224308.179.peg.1175"/>
<dbReference type="eggNOG" id="COG0175">
    <property type="taxonomic scope" value="Bacteria"/>
</dbReference>
<dbReference type="InParanoid" id="O06737"/>
<dbReference type="OrthoDB" id="9772604at2"/>
<dbReference type="PhylomeDB" id="O06737"/>
<dbReference type="BioCyc" id="BSUB:BSU10930-MONOMER"/>
<dbReference type="Proteomes" id="UP000001570">
    <property type="component" value="Chromosome"/>
</dbReference>
<dbReference type="GO" id="GO:0005737">
    <property type="term" value="C:cytoplasm"/>
    <property type="evidence" value="ECO:0007669"/>
    <property type="project" value="UniProtKB-SubCell"/>
</dbReference>
<dbReference type="GO" id="GO:0051539">
    <property type="term" value="F:4 iron, 4 sulfur cluster binding"/>
    <property type="evidence" value="ECO:0007669"/>
    <property type="project" value="UniProtKB-UniRule"/>
</dbReference>
<dbReference type="GO" id="GO:0043866">
    <property type="term" value="F:adenylyl-sulfate reductase (thioredoxin) activity"/>
    <property type="evidence" value="ECO:0007669"/>
    <property type="project" value="UniProtKB-EC"/>
</dbReference>
<dbReference type="GO" id="GO:0046872">
    <property type="term" value="F:metal ion binding"/>
    <property type="evidence" value="ECO:0007669"/>
    <property type="project" value="UniProtKB-KW"/>
</dbReference>
<dbReference type="GO" id="GO:0004604">
    <property type="term" value="F:phosphoadenylyl-sulfate reductase (thioredoxin) activity"/>
    <property type="evidence" value="ECO:0000318"/>
    <property type="project" value="GO_Central"/>
</dbReference>
<dbReference type="GO" id="GO:0019344">
    <property type="term" value="P:cysteine biosynthetic process"/>
    <property type="evidence" value="ECO:0007669"/>
    <property type="project" value="InterPro"/>
</dbReference>
<dbReference type="GO" id="GO:0070814">
    <property type="term" value="P:hydrogen sulfide biosynthetic process"/>
    <property type="evidence" value="ECO:0007669"/>
    <property type="project" value="UniProtKB-UniRule"/>
</dbReference>
<dbReference type="GO" id="GO:0019379">
    <property type="term" value="P:sulfate assimilation, phosphoadenylyl sulfate reduction by phosphoadenylyl-sulfate reductase (thioredoxin)"/>
    <property type="evidence" value="ECO:0000318"/>
    <property type="project" value="GO_Central"/>
</dbReference>
<dbReference type="CDD" id="cd23945">
    <property type="entry name" value="PAPS_reductase"/>
    <property type="match status" value="1"/>
</dbReference>
<dbReference type="FunFam" id="3.40.50.620:FF:000095">
    <property type="entry name" value="Phosphoadenosine phosphosulfate reductase"/>
    <property type="match status" value="1"/>
</dbReference>
<dbReference type="Gene3D" id="3.40.50.620">
    <property type="entry name" value="HUPs"/>
    <property type="match status" value="1"/>
</dbReference>
<dbReference type="HAMAP" id="MF_00063">
    <property type="entry name" value="CysH"/>
    <property type="match status" value="1"/>
</dbReference>
<dbReference type="InterPro" id="IPR011798">
    <property type="entry name" value="APS_reductase"/>
</dbReference>
<dbReference type="InterPro" id="IPR004511">
    <property type="entry name" value="PAPS/APS_Rdtase"/>
</dbReference>
<dbReference type="InterPro" id="IPR002500">
    <property type="entry name" value="PAPS_reduct_dom"/>
</dbReference>
<dbReference type="InterPro" id="IPR014729">
    <property type="entry name" value="Rossmann-like_a/b/a_fold"/>
</dbReference>
<dbReference type="NCBIfam" id="TIGR02055">
    <property type="entry name" value="APS_reductase"/>
    <property type="match status" value="1"/>
</dbReference>
<dbReference type="NCBIfam" id="TIGR00434">
    <property type="entry name" value="cysH"/>
    <property type="match status" value="1"/>
</dbReference>
<dbReference type="NCBIfam" id="NF002537">
    <property type="entry name" value="PRK02090.1"/>
    <property type="match status" value="1"/>
</dbReference>
<dbReference type="PANTHER" id="PTHR46509">
    <property type="entry name" value="PHOSPHOADENOSINE PHOSPHOSULFATE REDUCTASE"/>
    <property type="match status" value="1"/>
</dbReference>
<dbReference type="PANTHER" id="PTHR46509:SF1">
    <property type="entry name" value="PHOSPHOADENOSINE PHOSPHOSULFATE REDUCTASE"/>
    <property type="match status" value="1"/>
</dbReference>
<dbReference type="Pfam" id="PF01507">
    <property type="entry name" value="PAPS_reduct"/>
    <property type="match status" value="1"/>
</dbReference>
<dbReference type="PIRSF" id="PIRSF000857">
    <property type="entry name" value="PAPS_reductase"/>
    <property type="match status" value="1"/>
</dbReference>
<dbReference type="SUPFAM" id="SSF52402">
    <property type="entry name" value="Adenine nucleotide alpha hydrolases-like"/>
    <property type="match status" value="1"/>
</dbReference>
<name>CYSH2_BACSU</name>
<feature type="chain" id="PRO_0000100627" description="Adenosine 5'-phosphosulfate reductase 2">
    <location>
        <begin position="1"/>
        <end position="236"/>
    </location>
</feature>
<feature type="region of interest" description="Disordered" evidence="2">
    <location>
        <begin position="216"/>
        <end position="236"/>
    </location>
</feature>
<feature type="active site" description="Nucleophile; cysteine thiosulfonate intermediate" evidence="1">
    <location>
        <position position="231"/>
    </location>
</feature>
<feature type="binding site" evidence="1">
    <location>
        <position position="122"/>
    </location>
    <ligand>
        <name>[4Fe-4S] cluster</name>
        <dbReference type="ChEBI" id="CHEBI:49883"/>
    </ligand>
</feature>
<feature type="binding site" evidence="1">
    <location>
        <position position="123"/>
    </location>
    <ligand>
        <name>[4Fe-4S] cluster</name>
        <dbReference type="ChEBI" id="CHEBI:49883"/>
    </ligand>
</feature>
<feature type="binding site" evidence="1">
    <location>
        <position position="205"/>
    </location>
    <ligand>
        <name>[4Fe-4S] cluster</name>
        <dbReference type="ChEBI" id="CHEBI:49883"/>
    </ligand>
</feature>
<feature type="binding site" evidence="1">
    <location>
        <position position="208"/>
    </location>
    <ligand>
        <name>[4Fe-4S] cluster</name>
        <dbReference type="ChEBI" id="CHEBI:49883"/>
    </ligand>
</feature>
<proteinExistence type="inferred from homology"/>
<gene>
    <name evidence="1" type="primary">cysH1</name>
    <name type="synonym">yitB</name>
    <name type="ordered locus">BSU10930</name>
</gene>
<comment type="function">
    <text evidence="1">Catalyzes the formation of sulfite from adenosine 5'-phosphosulfate (APS) using thioredoxin as an electron donor.</text>
</comment>
<comment type="catalytic activity">
    <reaction evidence="1">
        <text>[thioredoxin]-disulfide + sulfite + AMP + 2 H(+) = adenosine 5'-phosphosulfate + [thioredoxin]-dithiol</text>
        <dbReference type="Rhea" id="RHEA:21976"/>
        <dbReference type="Rhea" id="RHEA-COMP:10698"/>
        <dbReference type="Rhea" id="RHEA-COMP:10700"/>
        <dbReference type="ChEBI" id="CHEBI:15378"/>
        <dbReference type="ChEBI" id="CHEBI:17359"/>
        <dbReference type="ChEBI" id="CHEBI:29950"/>
        <dbReference type="ChEBI" id="CHEBI:50058"/>
        <dbReference type="ChEBI" id="CHEBI:58243"/>
        <dbReference type="ChEBI" id="CHEBI:456215"/>
        <dbReference type="EC" id="1.8.4.10"/>
    </reaction>
</comment>
<comment type="cofactor">
    <cofactor evidence="1">
        <name>[4Fe-4S] cluster</name>
        <dbReference type="ChEBI" id="CHEBI:49883"/>
    </cofactor>
    <text evidence="1">Binds 1 [4Fe-4S] cluster per subunit.</text>
</comment>
<comment type="pathway">
    <text evidence="1">Sulfur metabolism; hydrogen sulfide biosynthesis; sulfite from sulfate.</text>
</comment>
<comment type="subcellular location">
    <subcellularLocation>
        <location evidence="1">Cytoplasm</location>
    </subcellularLocation>
</comment>
<comment type="similarity">
    <text evidence="1 3">Belongs to the PAPS reductase family. CysH subfamily.</text>
</comment>
<comment type="sequence caution" evidence="3">
    <conflict type="erroneous initiation">
        <sequence resource="EMBL-CDS" id="CAA70657"/>
    </conflict>
</comment>
<sequence length="236" mass="27671">MNETITYDTWNDMLSKQITDQLIDELDVLKWAYRTYGEKIVYACSFGAEGMVLLDLISKINKNAHIIFLDTGLHFQETYELIETVKERYPGFAIQMLEPELSLTEQGTKYGGELWKHNPNLCCQLRKIEPLKKHLSGMTAWISGLRRDQSPTRKHIQYVNLDQKFELIKICPLIHWTWDDVWTYIRLHNLPYNKLHDQHYPSIGCEMCTLPSPDPNDERAGRWAGREKTECGLHQE</sequence>
<organism>
    <name type="scientific">Bacillus subtilis (strain 168)</name>
    <dbReference type="NCBI Taxonomy" id="224308"/>
    <lineage>
        <taxon>Bacteria</taxon>
        <taxon>Bacillati</taxon>
        <taxon>Bacillota</taxon>
        <taxon>Bacilli</taxon>
        <taxon>Bacillales</taxon>
        <taxon>Bacillaceae</taxon>
        <taxon>Bacillus</taxon>
    </lineage>
</organism>
<keyword id="KW-0963">Cytoplasm</keyword>
<keyword id="KW-0408">Iron</keyword>
<keyword id="KW-0411">Iron-sulfur</keyword>
<keyword id="KW-0479">Metal-binding</keyword>
<keyword id="KW-0560">Oxidoreductase</keyword>
<keyword id="KW-1185">Reference proteome</keyword>
<evidence type="ECO:0000255" key="1">
    <source>
        <dbReference type="HAMAP-Rule" id="MF_00063"/>
    </source>
</evidence>
<evidence type="ECO:0000256" key="2">
    <source>
        <dbReference type="SAM" id="MobiDB-lite"/>
    </source>
</evidence>
<evidence type="ECO:0000305" key="3"/>
<accession>O06737</accession>